<protein>
    <recommendedName>
        <fullName>Penicillin-binding protein H</fullName>
        <ecNumber evidence="5">3.4.16.4</ecNumber>
    </recommendedName>
</protein>
<proteinExistence type="evidence at protein level"/>
<gene>
    <name evidence="5" type="primary">pbpH</name>
    <name type="synonym">ykuA</name>
    <name type="ordered locus">BSU13980</name>
</gene>
<keyword id="KW-0046">Antibiotic resistance</keyword>
<keyword id="KW-0121">Carboxypeptidase</keyword>
<keyword id="KW-1003">Cell membrane</keyword>
<keyword id="KW-0133">Cell shape</keyword>
<keyword id="KW-0961">Cell wall biogenesis/degradation</keyword>
<keyword id="KW-0378">Hydrolase</keyword>
<keyword id="KW-0472">Membrane</keyword>
<keyword id="KW-0573">Peptidoglycan synthesis</keyword>
<keyword id="KW-0645">Protease</keyword>
<keyword id="KW-1185">Reference proteome</keyword>
<keyword id="KW-0812">Transmembrane</keyword>
<keyword id="KW-1133">Transmembrane helix</keyword>
<evidence type="ECO:0000250" key="1">
    <source>
        <dbReference type="UniProtKB" id="P0AD65"/>
    </source>
</evidence>
<evidence type="ECO:0000255" key="2"/>
<evidence type="ECO:0000256" key="3">
    <source>
        <dbReference type="SAM" id="MobiDB-lite"/>
    </source>
</evidence>
<evidence type="ECO:0000269" key="4">
    <source>
    </source>
</evidence>
<evidence type="ECO:0000303" key="5">
    <source>
    </source>
</evidence>
<evidence type="ECO:0000305" key="6"/>
<evidence type="ECO:0000305" key="7">
    <source>
    </source>
</evidence>
<name>PBPH_BACSU</name>
<accession>Q796K8</accession>
<accession>O31399</accession>
<sequence>MTEIGREPKKKSKGNRAIRMNLFFLAVFVLFTALIFKLGVVQIVEGEQHEEDAEKSNAKTAYYPAPRGKMYDRNQKVAVDNQSVPEIVYVSTSSTKTEDKIKTAKRLASFIHIDTEFLKERDLRDYWIAAHPKKAAALLKESESNLKGDQAYKLQIERVPDQELKAIQQDDEEMETAAIYTRFSSGNAYEPQIVKAMNPNKSNSNGKNGALLDEKKNSSQRPKNDLTYDEISIVSEHLEELPGIDIVNDWTRKYPYDKTLYSVFGGVTTPDQGLLSDRKDFYLTRGYANNDRVGKSYLEYQYEEYLNSHKEKVEYVEDNKGNVVSQKTIDKGSRGYDLQLSFDMELQAKVEKIIEEEVRNSRARGNYMLDRAFAVMMDPNNGDILSMAGKKIDLKTNKIEDYAIGAFTTQYEMGSAVKGATVLAGYQDGIPHYKYYIDAPMLLGTNLIKKSYTNMGTINELTALQKSSNVYMFNVAMHIAGVTYKPHGSLPADQNDLLKMRNYYSQFGLGVKTGIDLPQESAGMQTTPKTVGGLILDLAIGQYDTYTPLQMAQYISVIANGGYRVQPRIVTSIHKPGKKDQLGKAIEHRKPKVLNKINNSESDLKQVQTGMKLVTSSGTAKNTFTEDVSGKTGTAETFYYGTNRNWWGKKTYNLTFVGYYPSKKPKVAFSVVVPSVDDDDKINKIIAKRAIHAYAELEKKHSKK</sequence>
<feature type="chain" id="PRO_0000360660" description="Penicillin-binding protein H">
    <location>
        <begin position="1"/>
        <end position="704"/>
    </location>
</feature>
<feature type="transmembrane region" description="Helical" evidence="2">
    <location>
        <begin position="23"/>
        <end position="43"/>
    </location>
</feature>
<feature type="region of interest" description="Disordered" evidence="3">
    <location>
        <begin position="197"/>
        <end position="223"/>
    </location>
</feature>
<feature type="compositionally biased region" description="Low complexity" evidence="3">
    <location>
        <begin position="200"/>
        <end position="209"/>
    </location>
</feature>
<feature type="compositionally biased region" description="Basic and acidic residues" evidence="3">
    <location>
        <begin position="212"/>
        <end position="223"/>
    </location>
</feature>
<feature type="active site" description="Acyl-ester intermediate" evidence="1">
    <location>
        <position position="415"/>
    </location>
</feature>
<dbReference type="EC" id="3.4.16.4" evidence="5"/>
<dbReference type="EMBL" id="AJ222587">
    <property type="protein sequence ID" value="CAA10861.1"/>
    <property type="molecule type" value="Genomic_DNA"/>
</dbReference>
<dbReference type="EMBL" id="AL009126">
    <property type="protein sequence ID" value="CAB13271.2"/>
    <property type="molecule type" value="Genomic_DNA"/>
</dbReference>
<dbReference type="PIR" id="G69864">
    <property type="entry name" value="G69864"/>
</dbReference>
<dbReference type="RefSeq" id="NP_389281.2">
    <property type="nucleotide sequence ID" value="NC_000964.3"/>
</dbReference>
<dbReference type="RefSeq" id="WP_003245075.1">
    <property type="nucleotide sequence ID" value="NZ_OZ025638.1"/>
</dbReference>
<dbReference type="SMR" id="Q796K8"/>
<dbReference type="FunCoup" id="Q796K8">
    <property type="interactions" value="30"/>
</dbReference>
<dbReference type="IntAct" id="Q796K8">
    <property type="interactions" value="1"/>
</dbReference>
<dbReference type="STRING" id="224308.BSU13980"/>
<dbReference type="PaxDb" id="224308-BSU13980"/>
<dbReference type="EnsemblBacteria" id="CAB13271">
    <property type="protein sequence ID" value="CAB13271"/>
    <property type="gene ID" value="BSU_13980"/>
</dbReference>
<dbReference type="GeneID" id="936204"/>
<dbReference type="KEGG" id="bsu:BSU13980"/>
<dbReference type="PATRIC" id="fig|224308.179.peg.1524"/>
<dbReference type="eggNOG" id="COG0768">
    <property type="taxonomic scope" value="Bacteria"/>
</dbReference>
<dbReference type="InParanoid" id="Q796K8"/>
<dbReference type="OrthoDB" id="9770103at2"/>
<dbReference type="BioCyc" id="BSUB:BSU13980-MONOMER"/>
<dbReference type="UniPathway" id="UPA00219"/>
<dbReference type="Proteomes" id="UP000001570">
    <property type="component" value="Chromosome"/>
</dbReference>
<dbReference type="GO" id="GO:0005886">
    <property type="term" value="C:plasma membrane"/>
    <property type="evidence" value="ECO:0000318"/>
    <property type="project" value="GO_Central"/>
</dbReference>
<dbReference type="GO" id="GO:0008658">
    <property type="term" value="F:penicillin binding"/>
    <property type="evidence" value="ECO:0000318"/>
    <property type="project" value="GO_Central"/>
</dbReference>
<dbReference type="GO" id="GO:0071972">
    <property type="term" value="F:peptidoglycan L,D-transpeptidase activity"/>
    <property type="evidence" value="ECO:0000318"/>
    <property type="project" value="GO_Central"/>
</dbReference>
<dbReference type="GO" id="GO:0009002">
    <property type="term" value="F:serine-type D-Ala-D-Ala carboxypeptidase activity"/>
    <property type="evidence" value="ECO:0007669"/>
    <property type="project" value="UniProtKB-EC"/>
</dbReference>
<dbReference type="GO" id="GO:0071555">
    <property type="term" value="P:cell wall organization"/>
    <property type="evidence" value="ECO:0000318"/>
    <property type="project" value="GO_Central"/>
</dbReference>
<dbReference type="GO" id="GO:0009252">
    <property type="term" value="P:peptidoglycan biosynthetic process"/>
    <property type="evidence" value="ECO:0007669"/>
    <property type="project" value="UniProtKB-UniPathway"/>
</dbReference>
<dbReference type="GO" id="GO:0006508">
    <property type="term" value="P:proteolysis"/>
    <property type="evidence" value="ECO:0007669"/>
    <property type="project" value="UniProtKB-KW"/>
</dbReference>
<dbReference type="GO" id="GO:0008360">
    <property type="term" value="P:regulation of cell shape"/>
    <property type="evidence" value="ECO:0007669"/>
    <property type="project" value="UniProtKB-KW"/>
</dbReference>
<dbReference type="GO" id="GO:0046677">
    <property type="term" value="P:response to antibiotic"/>
    <property type="evidence" value="ECO:0007669"/>
    <property type="project" value="UniProtKB-KW"/>
</dbReference>
<dbReference type="Gene3D" id="3.40.710.10">
    <property type="entry name" value="DD-peptidase/beta-lactamase superfamily"/>
    <property type="match status" value="1"/>
</dbReference>
<dbReference type="Gene3D" id="3.90.1310.10">
    <property type="entry name" value="Penicillin-binding protein 2a (Domain 2)"/>
    <property type="match status" value="2"/>
</dbReference>
<dbReference type="Gene3D" id="1.10.10.1230">
    <property type="entry name" value="Penicillin-binding protein, N-terminal non-catalytic domain, head sub-domain"/>
    <property type="match status" value="2"/>
</dbReference>
<dbReference type="InterPro" id="IPR050515">
    <property type="entry name" value="Bact_Transpept/Beta-Lactamase"/>
</dbReference>
<dbReference type="InterPro" id="IPR012338">
    <property type="entry name" value="Beta-lactam/transpept-like"/>
</dbReference>
<dbReference type="InterPro" id="IPR005311">
    <property type="entry name" value="PBP_dimer"/>
</dbReference>
<dbReference type="InterPro" id="IPR036138">
    <property type="entry name" value="PBP_dimer_sf"/>
</dbReference>
<dbReference type="InterPro" id="IPR001460">
    <property type="entry name" value="PCN-bd_Tpept"/>
</dbReference>
<dbReference type="PANTHER" id="PTHR30627">
    <property type="entry name" value="PEPTIDOGLYCAN D,D-TRANSPEPTIDASE"/>
    <property type="match status" value="1"/>
</dbReference>
<dbReference type="PANTHER" id="PTHR30627:SF2">
    <property type="entry name" value="PEPTIDOGLYCAN D,D-TRANSPEPTIDASE MRDA"/>
    <property type="match status" value="1"/>
</dbReference>
<dbReference type="Pfam" id="PF03717">
    <property type="entry name" value="PBP_dimer"/>
    <property type="match status" value="1"/>
</dbReference>
<dbReference type="Pfam" id="PF00905">
    <property type="entry name" value="Transpeptidase"/>
    <property type="match status" value="1"/>
</dbReference>
<dbReference type="SUPFAM" id="SSF56601">
    <property type="entry name" value="beta-lactamase/transpeptidase-like"/>
    <property type="match status" value="1"/>
</dbReference>
<dbReference type="SUPFAM" id="SSF56519">
    <property type="entry name" value="Penicillin binding protein dimerisation domain"/>
    <property type="match status" value="1"/>
</dbReference>
<reference key="1">
    <citation type="submission" date="1997-11" db="EMBL/GenBank/DDBJ databases">
        <title>Sequence of the Bacillus subtilis chromosome from ykuA to cse-15.</title>
        <authorList>
            <person name="Scanlan E."/>
            <person name="Devine K.M."/>
        </authorList>
    </citation>
    <scope>NUCLEOTIDE SEQUENCE [GENOMIC DNA]</scope>
    <source>
        <strain>168</strain>
    </source>
</reference>
<reference key="2">
    <citation type="journal article" date="1997" name="Nature">
        <title>The complete genome sequence of the Gram-positive bacterium Bacillus subtilis.</title>
        <authorList>
            <person name="Kunst F."/>
            <person name="Ogasawara N."/>
            <person name="Moszer I."/>
            <person name="Albertini A.M."/>
            <person name="Alloni G."/>
            <person name="Azevedo V."/>
            <person name="Bertero M.G."/>
            <person name="Bessieres P."/>
            <person name="Bolotin A."/>
            <person name="Borchert S."/>
            <person name="Borriss R."/>
            <person name="Boursier L."/>
            <person name="Brans A."/>
            <person name="Braun M."/>
            <person name="Brignell S.C."/>
            <person name="Bron S."/>
            <person name="Brouillet S."/>
            <person name="Bruschi C.V."/>
            <person name="Caldwell B."/>
            <person name="Capuano V."/>
            <person name="Carter N.M."/>
            <person name="Choi S.-K."/>
            <person name="Codani J.-J."/>
            <person name="Connerton I.F."/>
            <person name="Cummings N.J."/>
            <person name="Daniel R.A."/>
            <person name="Denizot F."/>
            <person name="Devine K.M."/>
            <person name="Duesterhoeft A."/>
            <person name="Ehrlich S.D."/>
            <person name="Emmerson P.T."/>
            <person name="Entian K.-D."/>
            <person name="Errington J."/>
            <person name="Fabret C."/>
            <person name="Ferrari E."/>
            <person name="Foulger D."/>
            <person name="Fritz C."/>
            <person name="Fujita M."/>
            <person name="Fujita Y."/>
            <person name="Fuma S."/>
            <person name="Galizzi A."/>
            <person name="Galleron N."/>
            <person name="Ghim S.-Y."/>
            <person name="Glaser P."/>
            <person name="Goffeau A."/>
            <person name="Golightly E.J."/>
            <person name="Grandi G."/>
            <person name="Guiseppi G."/>
            <person name="Guy B.J."/>
            <person name="Haga K."/>
            <person name="Haiech J."/>
            <person name="Harwood C.R."/>
            <person name="Henaut A."/>
            <person name="Hilbert H."/>
            <person name="Holsappel S."/>
            <person name="Hosono S."/>
            <person name="Hullo M.-F."/>
            <person name="Itaya M."/>
            <person name="Jones L.-M."/>
            <person name="Joris B."/>
            <person name="Karamata D."/>
            <person name="Kasahara Y."/>
            <person name="Klaerr-Blanchard M."/>
            <person name="Klein C."/>
            <person name="Kobayashi Y."/>
            <person name="Koetter P."/>
            <person name="Koningstein G."/>
            <person name="Krogh S."/>
            <person name="Kumano M."/>
            <person name="Kurita K."/>
            <person name="Lapidus A."/>
            <person name="Lardinois S."/>
            <person name="Lauber J."/>
            <person name="Lazarevic V."/>
            <person name="Lee S.-M."/>
            <person name="Levine A."/>
            <person name="Liu H."/>
            <person name="Masuda S."/>
            <person name="Mauel C."/>
            <person name="Medigue C."/>
            <person name="Medina N."/>
            <person name="Mellado R.P."/>
            <person name="Mizuno M."/>
            <person name="Moestl D."/>
            <person name="Nakai S."/>
            <person name="Noback M."/>
            <person name="Noone D."/>
            <person name="O'Reilly M."/>
            <person name="Ogawa K."/>
            <person name="Ogiwara A."/>
            <person name="Oudega B."/>
            <person name="Park S.-H."/>
            <person name="Parro V."/>
            <person name="Pohl T.M."/>
            <person name="Portetelle D."/>
            <person name="Porwollik S."/>
            <person name="Prescott A.M."/>
            <person name="Presecan E."/>
            <person name="Pujic P."/>
            <person name="Purnelle B."/>
            <person name="Rapoport G."/>
            <person name="Rey M."/>
            <person name="Reynolds S."/>
            <person name="Rieger M."/>
            <person name="Rivolta C."/>
            <person name="Rocha E."/>
            <person name="Roche B."/>
            <person name="Rose M."/>
            <person name="Sadaie Y."/>
            <person name="Sato T."/>
            <person name="Scanlan E."/>
            <person name="Schleich S."/>
            <person name="Schroeter R."/>
            <person name="Scoffone F."/>
            <person name="Sekiguchi J."/>
            <person name="Sekowska A."/>
            <person name="Seror S.J."/>
            <person name="Serror P."/>
            <person name="Shin B.-S."/>
            <person name="Soldo B."/>
            <person name="Sorokin A."/>
            <person name="Tacconi E."/>
            <person name="Takagi T."/>
            <person name="Takahashi H."/>
            <person name="Takemaru K."/>
            <person name="Takeuchi M."/>
            <person name="Tamakoshi A."/>
            <person name="Tanaka T."/>
            <person name="Terpstra P."/>
            <person name="Tognoni A."/>
            <person name="Tosato V."/>
            <person name="Uchiyama S."/>
            <person name="Vandenbol M."/>
            <person name="Vannier F."/>
            <person name="Vassarotti A."/>
            <person name="Viari A."/>
            <person name="Wambutt R."/>
            <person name="Wedler E."/>
            <person name="Wedler H."/>
            <person name="Weitzenegger T."/>
            <person name="Winters P."/>
            <person name="Wipat A."/>
            <person name="Yamamoto H."/>
            <person name="Yamane K."/>
            <person name="Yasumoto K."/>
            <person name="Yata K."/>
            <person name="Yoshida K."/>
            <person name="Yoshikawa H.-F."/>
            <person name="Zumstein E."/>
            <person name="Yoshikawa H."/>
            <person name="Danchin A."/>
        </authorList>
    </citation>
    <scope>NUCLEOTIDE SEQUENCE [LARGE SCALE GENOMIC DNA]</scope>
    <source>
        <strain>168</strain>
    </source>
</reference>
<reference key="3">
    <citation type="journal article" date="2003" name="J. Bacteriol.">
        <title>Rod shape determination by the Bacillus subtilis class B penicillin-binding proteins encoded by pbpA and pbpH.</title>
        <authorList>
            <person name="Wei Y."/>
            <person name="Havasy T."/>
            <person name="McPherson D.C."/>
            <person name="Popham D.L."/>
        </authorList>
    </citation>
    <scope>FUNCTION IN CELL SHAPE DETERMINATION</scope>
    <scope>TRANSLATIONAL START SITE</scope>
    <scope>INDUCTION</scope>
    <scope>DISRUPTION PHENOTYPE</scope>
    <source>
        <strain>168 / PS832</strain>
    </source>
</reference>
<comment type="function">
    <text evidence="4">Involved in the polymerization of peptidoglycan. Plays a redundant role with PBP-2A (pbpA) in determining the rod shape of the cell during vegetative growth and spore outgrowth.</text>
</comment>
<comment type="catalytic activity">
    <reaction evidence="7">
        <text>Preferential cleavage: (Ac)2-L-Lys-D-Ala-|-D-Ala. Also transpeptidation of peptidyl-alanyl moieties that are N-acyl substituents of D-alanine.</text>
        <dbReference type="EC" id="3.4.16.4"/>
    </reaction>
</comment>
<comment type="pathway">
    <text>Cell wall biogenesis; peptidoglycan biosynthesis.</text>
</comment>
<comment type="subcellular location">
    <subcellularLocation>
        <location evidence="6">Cell membrane</location>
        <topology evidence="6">Single-pass membrane protein</topology>
    </subcellularLocation>
</comment>
<comment type="induction">
    <text evidence="4">Increases progressively during log phase, peaking at stationary phase of vegetative growth.</text>
</comment>
<comment type="disruption phenotype">
    <text evidence="4">No visible phenotype during vegetative growth, sporulation or spore germination. No change in antibiotic resistance. Double pbpA-pbpH mutants cannot be made, suggesting the 2 proteins have redundant, essential roles in vegetative growth. Depletion of PbpH in the pbpA deletion leads to cell growth arrest after 3 generations; cells swell, round-up, many lyse and division septa are very irregular. Germinated spore are spherical and eventually lyse.</text>
</comment>
<comment type="similarity">
    <text evidence="6">Belongs to the transpeptidase family.</text>
</comment>
<comment type="caution">
    <text evidence="5">It is uncertain whether Met-1 or Met-20 is the initiator; if Met-20 then the protein would probably be secreted.</text>
</comment>
<organism>
    <name type="scientific">Bacillus subtilis (strain 168)</name>
    <dbReference type="NCBI Taxonomy" id="224308"/>
    <lineage>
        <taxon>Bacteria</taxon>
        <taxon>Bacillati</taxon>
        <taxon>Bacillota</taxon>
        <taxon>Bacilli</taxon>
        <taxon>Bacillales</taxon>
        <taxon>Bacillaceae</taxon>
        <taxon>Bacillus</taxon>
    </lineage>
</organism>